<evidence type="ECO:0000255" key="1">
    <source>
        <dbReference type="HAMAP-Rule" id="MF_00104"/>
    </source>
</evidence>
<organism>
    <name type="scientific">Yersinia pestis bv. Antiqua (strain Angola)</name>
    <dbReference type="NCBI Taxonomy" id="349746"/>
    <lineage>
        <taxon>Bacteria</taxon>
        <taxon>Pseudomonadati</taxon>
        <taxon>Pseudomonadota</taxon>
        <taxon>Gammaproteobacteria</taxon>
        <taxon>Enterobacterales</taxon>
        <taxon>Yersiniaceae</taxon>
        <taxon>Yersinia</taxon>
    </lineage>
</organism>
<proteinExistence type="inferred from homology"/>
<sequence length="226" mass="25707">MNPIVINRLQRKLGYTFQQQELLLQALTHRSASSKHNERLEFLGDSILSFVIANELYRRFPRVDEGDMSRMRATLVRGNTLAEMAREFDLGECLRLGPGELKSGGFRRESILADTVEALIGGVFLDSDIHTIERLILEWYHSRLEEISPGDKQKDPKTRLQEYLQGRHLPLPSYLVVQVRGEAHDQEFTIHCQVSGLNEPVIGTGSSRRKAEQAAAEQALKQLELE</sequence>
<dbReference type="EC" id="3.1.26.3" evidence="1"/>
<dbReference type="EMBL" id="CP000901">
    <property type="protein sequence ID" value="ABX86002.1"/>
    <property type="molecule type" value="Genomic_DNA"/>
</dbReference>
<dbReference type="RefSeq" id="WP_002209679.1">
    <property type="nucleotide sequence ID" value="NZ_CP009935.1"/>
</dbReference>
<dbReference type="SMR" id="A9R402"/>
<dbReference type="GeneID" id="57975973"/>
<dbReference type="KEGG" id="ypg:YpAngola_A3611"/>
<dbReference type="PATRIC" id="fig|349746.12.peg.311"/>
<dbReference type="GO" id="GO:0005737">
    <property type="term" value="C:cytoplasm"/>
    <property type="evidence" value="ECO:0007669"/>
    <property type="project" value="UniProtKB-SubCell"/>
</dbReference>
<dbReference type="GO" id="GO:0003725">
    <property type="term" value="F:double-stranded RNA binding"/>
    <property type="evidence" value="ECO:0007669"/>
    <property type="project" value="TreeGrafter"/>
</dbReference>
<dbReference type="GO" id="GO:0046872">
    <property type="term" value="F:metal ion binding"/>
    <property type="evidence" value="ECO:0007669"/>
    <property type="project" value="UniProtKB-KW"/>
</dbReference>
<dbReference type="GO" id="GO:0004525">
    <property type="term" value="F:ribonuclease III activity"/>
    <property type="evidence" value="ECO:0007669"/>
    <property type="project" value="UniProtKB-UniRule"/>
</dbReference>
<dbReference type="GO" id="GO:0019843">
    <property type="term" value="F:rRNA binding"/>
    <property type="evidence" value="ECO:0007669"/>
    <property type="project" value="UniProtKB-KW"/>
</dbReference>
<dbReference type="GO" id="GO:0006397">
    <property type="term" value="P:mRNA processing"/>
    <property type="evidence" value="ECO:0007669"/>
    <property type="project" value="UniProtKB-UniRule"/>
</dbReference>
<dbReference type="GO" id="GO:0010468">
    <property type="term" value="P:regulation of gene expression"/>
    <property type="evidence" value="ECO:0007669"/>
    <property type="project" value="TreeGrafter"/>
</dbReference>
<dbReference type="GO" id="GO:0006364">
    <property type="term" value="P:rRNA processing"/>
    <property type="evidence" value="ECO:0007669"/>
    <property type="project" value="UniProtKB-UniRule"/>
</dbReference>
<dbReference type="GO" id="GO:0008033">
    <property type="term" value="P:tRNA processing"/>
    <property type="evidence" value="ECO:0007669"/>
    <property type="project" value="UniProtKB-KW"/>
</dbReference>
<dbReference type="CDD" id="cd10845">
    <property type="entry name" value="DSRM_RNAse_III_family"/>
    <property type="match status" value="1"/>
</dbReference>
<dbReference type="CDD" id="cd00593">
    <property type="entry name" value="RIBOc"/>
    <property type="match status" value="1"/>
</dbReference>
<dbReference type="FunFam" id="1.10.1520.10:FF:000001">
    <property type="entry name" value="Ribonuclease 3"/>
    <property type="match status" value="1"/>
</dbReference>
<dbReference type="FunFam" id="3.30.160.20:FF:000003">
    <property type="entry name" value="Ribonuclease 3"/>
    <property type="match status" value="1"/>
</dbReference>
<dbReference type="Gene3D" id="3.30.160.20">
    <property type="match status" value="1"/>
</dbReference>
<dbReference type="Gene3D" id="1.10.1520.10">
    <property type="entry name" value="Ribonuclease III domain"/>
    <property type="match status" value="1"/>
</dbReference>
<dbReference type="HAMAP" id="MF_00104">
    <property type="entry name" value="RNase_III"/>
    <property type="match status" value="1"/>
</dbReference>
<dbReference type="InterPro" id="IPR014720">
    <property type="entry name" value="dsRBD_dom"/>
</dbReference>
<dbReference type="InterPro" id="IPR011907">
    <property type="entry name" value="RNase_III"/>
</dbReference>
<dbReference type="InterPro" id="IPR000999">
    <property type="entry name" value="RNase_III_dom"/>
</dbReference>
<dbReference type="InterPro" id="IPR036389">
    <property type="entry name" value="RNase_III_sf"/>
</dbReference>
<dbReference type="NCBIfam" id="TIGR02191">
    <property type="entry name" value="RNaseIII"/>
    <property type="match status" value="1"/>
</dbReference>
<dbReference type="PANTHER" id="PTHR11207:SF0">
    <property type="entry name" value="RIBONUCLEASE 3"/>
    <property type="match status" value="1"/>
</dbReference>
<dbReference type="PANTHER" id="PTHR11207">
    <property type="entry name" value="RIBONUCLEASE III"/>
    <property type="match status" value="1"/>
</dbReference>
<dbReference type="Pfam" id="PF00035">
    <property type="entry name" value="dsrm"/>
    <property type="match status" value="1"/>
</dbReference>
<dbReference type="Pfam" id="PF14622">
    <property type="entry name" value="Ribonucleas_3_3"/>
    <property type="match status" value="1"/>
</dbReference>
<dbReference type="SMART" id="SM00358">
    <property type="entry name" value="DSRM"/>
    <property type="match status" value="1"/>
</dbReference>
<dbReference type="SMART" id="SM00535">
    <property type="entry name" value="RIBOc"/>
    <property type="match status" value="1"/>
</dbReference>
<dbReference type="SUPFAM" id="SSF54768">
    <property type="entry name" value="dsRNA-binding domain-like"/>
    <property type="match status" value="1"/>
</dbReference>
<dbReference type="SUPFAM" id="SSF69065">
    <property type="entry name" value="RNase III domain-like"/>
    <property type="match status" value="1"/>
</dbReference>
<dbReference type="PROSITE" id="PS50137">
    <property type="entry name" value="DS_RBD"/>
    <property type="match status" value="1"/>
</dbReference>
<dbReference type="PROSITE" id="PS00517">
    <property type="entry name" value="RNASE_3_1"/>
    <property type="match status" value="1"/>
</dbReference>
<dbReference type="PROSITE" id="PS50142">
    <property type="entry name" value="RNASE_3_2"/>
    <property type="match status" value="1"/>
</dbReference>
<comment type="function">
    <text evidence="1">Digests double-stranded RNA. Involved in the processing of primary rRNA transcript to yield the immediate precursors to the large and small rRNAs (23S and 16S). Processes some mRNAs, and tRNAs when they are encoded in the rRNA operon. Processes pre-crRNA and tracrRNA of type II CRISPR loci if present in the organism.</text>
</comment>
<comment type="catalytic activity">
    <reaction evidence="1">
        <text>Endonucleolytic cleavage to 5'-phosphomonoester.</text>
        <dbReference type="EC" id="3.1.26.3"/>
    </reaction>
</comment>
<comment type="cofactor">
    <cofactor evidence="1">
        <name>Mg(2+)</name>
        <dbReference type="ChEBI" id="CHEBI:18420"/>
    </cofactor>
</comment>
<comment type="subunit">
    <text evidence="1">Homodimer.</text>
</comment>
<comment type="subcellular location">
    <subcellularLocation>
        <location evidence="1">Cytoplasm</location>
    </subcellularLocation>
</comment>
<comment type="similarity">
    <text evidence="1">Belongs to the ribonuclease III family.</text>
</comment>
<name>RNC_YERPG</name>
<keyword id="KW-0963">Cytoplasm</keyword>
<keyword id="KW-0255">Endonuclease</keyword>
<keyword id="KW-0378">Hydrolase</keyword>
<keyword id="KW-0460">Magnesium</keyword>
<keyword id="KW-0479">Metal-binding</keyword>
<keyword id="KW-0507">mRNA processing</keyword>
<keyword id="KW-0540">Nuclease</keyword>
<keyword id="KW-0694">RNA-binding</keyword>
<keyword id="KW-0698">rRNA processing</keyword>
<keyword id="KW-0699">rRNA-binding</keyword>
<keyword id="KW-0819">tRNA processing</keyword>
<reference key="1">
    <citation type="journal article" date="2010" name="J. Bacteriol.">
        <title>Genome sequence of the deep-rooted Yersinia pestis strain Angola reveals new insights into the evolution and pangenome of the plague bacterium.</title>
        <authorList>
            <person name="Eppinger M."/>
            <person name="Worsham P.L."/>
            <person name="Nikolich M.P."/>
            <person name="Riley D.R."/>
            <person name="Sebastian Y."/>
            <person name="Mou S."/>
            <person name="Achtman M."/>
            <person name="Lindler L.E."/>
            <person name="Ravel J."/>
        </authorList>
    </citation>
    <scope>NUCLEOTIDE SEQUENCE [LARGE SCALE GENOMIC DNA]</scope>
    <source>
        <strain>Angola</strain>
    </source>
</reference>
<accession>A9R402</accession>
<gene>
    <name evidence="1" type="primary">rnc</name>
    <name type="ordered locus">YpAngola_A3611</name>
</gene>
<feature type="chain" id="PRO_1000094144" description="Ribonuclease 3">
    <location>
        <begin position="1"/>
        <end position="226"/>
    </location>
</feature>
<feature type="domain" description="RNase III" evidence="1">
    <location>
        <begin position="6"/>
        <end position="128"/>
    </location>
</feature>
<feature type="domain" description="DRBM" evidence="1">
    <location>
        <begin position="155"/>
        <end position="225"/>
    </location>
</feature>
<feature type="active site" evidence="1">
    <location>
        <position position="45"/>
    </location>
</feature>
<feature type="active site" evidence="1">
    <location>
        <position position="117"/>
    </location>
</feature>
<feature type="binding site" evidence="1">
    <location>
        <position position="41"/>
    </location>
    <ligand>
        <name>Mg(2+)</name>
        <dbReference type="ChEBI" id="CHEBI:18420"/>
    </ligand>
</feature>
<feature type="binding site" evidence="1">
    <location>
        <position position="114"/>
    </location>
    <ligand>
        <name>Mg(2+)</name>
        <dbReference type="ChEBI" id="CHEBI:18420"/>
    </ligand>
</feature>
<feature type="binding site" evidence="1">
    <location>
        <position position="117"/>
    </location>
    <ligand>
        <name>Mg(2+)</name>
        <dbReference type="ChEBI" id="CHEBI:18420"/>
    </ligand>
</feature>
<protein>
    <recommendedName>
        <fullName evidence="1">Ribonuclease 3</fullName>
        <ecNumber evidence="1">3.1.26.3</ecNumber>
    </recommendedName>
    <alternativeName>
        <fullName evidence="1">Ribonuclease III</fullName>
        <shortName evidence="1">RNase III</shortName>
    </alternativeName>
</protein>